<sequence>MLIFEKSRKNRRTLAHAIADKMDANDIPANLLRHDAPRLPELSELEVVRHFTRLSTQNFSIDTHFYPLGSCTMKYNPRAANRLASLPGYLKRHPLSPAPQSQAFLQCLYELQTMLTEITGMEKISLTSMAGAQGEFAGVAMIKAYHESRGDYDRTEMIVPDAAHGTNPASAAMCGFTVKEISTTKDGDIDLEKLRQMAGAKTAGIMLTNPSTLGVFERQISEVAKIIHNAGGLLYYDGANLNAILGKYRPGDMGFDVMHLNLHKTFATPHGGGGPGAGPVAAGPRLSKFLPVPMVGKNKEGYDWLTEKECPKSIGRLSAFMGNSGVLLRAYIYLRLLGKEGLSRVAEFSTLNANYLMKRLEQLGFTLAFPNRRASHEFIITLKPLTRAYGVTALDIAKRLLDYGFHAPTIYFPLLVPECLLIEPTETESKQTLDHFIEAMEKILTEIKTTPDLLRNAPHQQLINRLDEVKAARELDLRWYPIAKETEIFIQ</sequence>
<feature type="chain" id="PRO_1000083228" description="Probable glycine dehydrogenase (decarboxylating) subunit 2">
    <location>
        <begin position="1"/>
        <end position="491"/>
    </location>
</feature>
<feature type="modified residue" description="N6-(pyridoxal phosphate)lysine" evidence="1">
    <location>
        <position position="264"/>
    </location>
</feature>
<proteinExistence type="inferred from homology"/>
<protein>
    <recommendedName>
        <fullName evidence="1">Probable glycine dehydrogenase (decarboxylating) subunit 2</fullName>
        <ecNumber evidence="1">1.4.4.2</ecNumber>
    </recommendedName>
    <alternativeName>
        <fullName evidence="1">Glycine cleavage system P-protein subunit 2</fullName>
    </alternativeName>
    <alternativeName>
        <fullName evidence="1">Glycine decarboxylase subunit 2</fullName>
    </alternativeName>
    <alternativeName>
        <fullName evidence="1">Glycine dehydrogenase (aminomethyl-transferring) subunit 2</fullName>
    </alternativeName>
</protein>
<gene>
    <name evidence="1" type="primary">gcvPB</name>
    <name type="ordered locus">CBUD_0293</name>
</gene>
<organism>
    <name type="scientific">Coxiella burnetii (strain Dugway 5J108-111)</name>
    <dbReference type="NCBI Taxonomy" id="434922"/>
    <lineage>
        <taxon>Bacteria</taxon>
        <taxon>Pseudomonadati</taxon>
        <taxon>Pseudomonadota</taxon>
        <taxon>Gammaproteobacteria</taxon>
        <taxon>Legionellales</taxon>
        <taxon>Coxiellaceae</taxon>
        <taxon>Coxiella</taxon>
    </lineage>
</organism>
<name>GCSPB_COXBN</name>
<keyword id="KW-0560">Oxidoreductase</keyword>
<keyword id="KW-0663">Pyridoxal phosphate</keyword>
<accession>A9KC20</accession>
<dbReference type="EC" id="1.4.4.2" evidence="1"/>
<dbReference type="EMBL" id="CP000733">
    <property type="protein sequence ID" value="ABS78325.1"/>
    <property type="molecule type" value="Genomic_DNA"/>
</dbReference>
<dbReference type="RefSeq" id="WP_010958389.1">
    <property type="nucleotide sequence ID" value="NC_009727.1"/>
</dbReference>
<dbReference type="SMR" id="A9KC20"/>
<dbReference type="KEGG" id="cbd:CBUD_0293"/>
<dbReference type="HOGENOM" id="CLU_004620_5_0_6"/>
<dbReference type="Proteomes" id="UP000008555">
    <property type="component" value="Chromosome"/>
</dbReference>
<dbReference type="GO" id="GO:0005829">
    <property type="term" value="C:cytosol"/>
    <property type="evidence" value="ECO:0007669"/>
    <property type="project" value="TreeGrafter"/>
</dbReference>
<dbReference type="GO" id="GO:0005960">
    <property type="term" value="C:glycine cleavage complex"/>
    <property type="evidence" value="ECO:0007669"/>
    <property type="project" value="TreeGrafter"/>
</dbReference>
<dbReference type="GO" id="GO:0016594">
    <property type="term" value="F:glycine binding"/>
    <property type="evidence" value="ECO:0007669"/>
    <property type="project" value="TreeGrafter"/>
</dbReference>
<dbReference type="GO" id="GO:0004375">
    <property type="term" value="F:glycine dehydrogenase (decarboxylating) activity"/>
    <property type="evidence" value="ECO:0007669"/>
    <property type="project" value="UniProtKB-EC"/>
</dbReference>
<dbReference type="GO" id="GO:0030170">
    <property type="term" value="F:pyridoxal phosphate binding"/>
    <property type="evidence" value="ECO:0007669"/>
    <property type="project" value="TreeGrafter"/>
</dbReference>
<dbReference type="GO" id="GO:0019464">
    <property type="term" value="P:glycine decarboxylation via glycine cleavage system"/>
    <property type="evidence" value="ECO:0007669"/>
    <property type="project" value="UniProtKB-UniRule"/>
</dbReference>
<dbReference type="CDD" id="cd00613">
    <property type="entry name" value="GDC-P"/>
    <property type="match status" value="1"/>
</dbReference>
<dbReference type="FunFam" id="3.40.640.10:FF:000034">
    <property type="entry name" value="Probable glycine dehydrogenase (decarboxylating) subunit 2"/>
    <property type="match status" value="1"/>
</dbReference>
<dbReference type="FunFam" id="3.90.1150.10:FF:000014">
    <property type="entry name" value="Probable glycine dehydrogenase (decarboxylating) subunit 2"/>
    <property type="match status" value="1"/>
</dbReference>
<dbReference type="Gene3D" id="6.20.440.10">
    <property type="match status" value="1"/>
</dbReference>
<dbReference type="Gene3D" id="3.90.1150.10">
    <property type="entry name" value="Aspartate Aminotransferase, domain 1"/>
    <property type="match status" value="1"/>
</dbReference>
<dbReference type="Gene3D" id="3.40.640.10">
    <property type="entry name" value="Type I PLP-dependent aspartate aminotransferase-like (Major domain)"/>
    <property type="match status" value="1"/>
</dbReference>
<dbReference type="HAMAP" id="MF_00713">
    <property type="entry name" value="GcvPB"/>
    <property type="match status" value="1"/>
</dbReference>
<dbReference type="InterPro" id="IPR023012">
    <property type="entry name" value="GcvPB"/>
</dbReference>
<dbReference type="InterPro" id="IPR049316">
    <property type="entry name" value="GDC-P_C"/>
</dbReference>
<dbReference type="InterPro" id="IPR049315">
    <property type="entry name" value="GDC-P_N"/>
</dbReference>
<dbReference type="InterPro" id="IPR020581">
    <property type="entry name" value="GDC_P"/>
</dbReference>
<dbReference type="InterPro" id="IPR015424">
    <property type="entry name" value="PyrdxlP-dep_Trfase"/>
</dbReference>
<dbReference type="InterPro" id="IPR015421">
    <property type="entry name" value="PyrdxlP-dep_Trfase_major"/>
</dbReference>
<dbReference type="InterPro" id="IPR015422">
    <property type="entry name" value="PyrdxlP-dep_Trfase_small"/>
</dbReference>
<dbReference type="NCBIfam" id="NF003346">
    <property type="entry name" value="PRK04366.1"/>
    <property type="match status" value="1"/>
</dbReference>
<dbReference type="PANTHER" id="PTHR11773:SF1">
    <property type="entry name" value="GLYCINE DEHYDROGENASE (DECARBOXYLATING), MITOCHONDRIAL"/>
    <property type="match status" value="1"/>
</dbReference>
<dbReference type="PANTHER" id="PTHR11773">
    <property type="entry name" value="GLYCINE DEHYDROGENASE, DECARBOXYLATING"/>
    <property type="match status" value="1"/>
</dbReference>
<dbReference type="Pfam" id="PF21478">
    <property type="entry name" value="GcvP2_C"/>
    <property type="match status" value="1"/>
</dbReference>
<dbReference type="Pfam" id="PF02347">
    <property type="entry name" value="GDC-P"/>
    <property type="match status" value="1"/>
</dbReference>
<dbReference type="SUPFAM" id="SSF53383">
    <property type="entry name" value="PLP-dependent transferases"/>
    <property type="match status" value="1"/>
</dbReference>
<evidence type="ECO:0000255" key="1">
    <source>
        <dbReference type="HAMAP-Rule" id="MF_00713"/>
    </source>
</evidence>
<comment type="function">
    <text evidence="1">The glycine cleavage system catalyzes the degradation of glycine. The P protein binds the alpha-amino group of glycine through its pyridoxal phosphate cofactor; CO(2) is released and the remaining methylamine moiety is then transferred to the lipoamide cofactor of the H protein.</text>
</comment>
<comment type="catalytic activity">
    <reaction evidence="1">
        <text>N(6)-[(R)-lipoyl]-L-lysyl-[glycine-cleavage complex H protein] + glycine + H(+) = N(6)-[(R)-S(8)-aminomethyldihydrolipoyl]-L-lysyl-[glycine-cleavage complex H protein] + CO2</text>
        <dbReference type="Rhea" id="RHEA:24304"/>
        <dbReference type="Rhea" id="RHEA-COMP:10494"/>
        <dbReference type="Rhea" id="RHEA-COMP:10495"/>
        <dbReference type="ChEBI" id="CHEBI:15378"/>
        <dbReference type="ChEBI" id="CHEBI:16526"/>
        <dbReference type="ChEBI" id="CHEBI:57305"/>
        <dbReference type="ChEBI" id="CHEBI:83099"/>
        <dbReference type="ChEBI" id="CHEBI:83143"/>
        <dbReference type="EC" id="1.4.4.2"/>
    </reaction>
</comment>
<comment type="cofactor">
    <cofactor evidence="1">
        <name>pyridoxal 5'-phosphate</name>
        <dbReference type="ChEBI" id="CHEBI:597326"/>
    </cofactor>
</comment>
<comment type="subunit">
    <text evidence="1">The glycine cleavage system is composed of four proteins: P, T, L and H. In this organism, the P 'protein' is a heterodimer of two subunits.</text>
</comment>
<comment type="similarity">
    <text evidence="1">Belongs to the GcvP family. C-terminal subunit subfamily.</text>
</comment>
<reference key="1">
    <citation type="journal article" date="2009" name="Infect. Immun.">
        <title>Comparative genomics reveal extensive transposon-mediated genomic plasticity and diversity among potential effector proteins within the genus Coxiella.</title>
        <authorList>
            <person name="Beare P.A."/>
            <person name="Unsworth N."/>
            <person name="Andoh M."/>
            <person name="Voth D.E."/>
            <person name="Omsland A."/>
            <person name="Gilk S.D."/>
            <person name="Williams K.P."/>
            <person name="Sobral B.W."/>
            <person name="Kupko J.J. III"/>
            <person name="Porcella S.F."/>
            <person name="Samuel J.E."/>
            <person name="Heinzen R.A."/>
        </authorList>
    </citation>
    <scope>NUCLEOTIDE SEQUENCE [LARGE SCALE GENOMIC DNA]</scope>
    <source>
        <strain>Dugway 5J108-111</strain>
    </source>
</reference>